<accession>Q6DRF9</accession>
<accession>Q502U3</accession>
<organism>
    <name type="scientific">Danio rerio</name>
    <name type="common">Zebrafish</name>
    <name type="synonym">Brachydanio rerio</name>
    <dbReference type="NCBI Taxonomy" id="7955"/>
    <lineage>
        <taxon>Eukaryota</taxon>
        <taxon>Metazoa</taxon>
        <taxon>Chordata</taxon>
        <taxon>Craniata</taxon>
        <taxon>Vertebrata</taxon>
        <taxon>Euteleostomi</taxon>
        <taxon>Actinopterygii</taxon>
        <taxon>Neopterygii</taxon>
        <taxon>Teleostei</taxon>
        <taxon>Ostariophysi</taxon>
        <taxon>Cypriniformes</taxon>
        <taxon>Danionidae</taxon>
        <taxon>Danioninae</taxon>
        <taxon>Danio</taxon>
    </lineage>
</organism>
<reference key="1">
    <citation type="journal article" date="2004" name="Proc. Natl. Acad. Sci. U.S.A.">
        <title>Identification of 315 genes essential for early zebrafish development.</title>
        <authorList>
            <person name="Amsterdam A."/>
            <person name="Nissen R.M."/>
            <person name="Sun Z."/>
            <person name="Swindell E.C."/>
            <person name="Farrington S."/>
            <person name="Hopkins N."/>
        </authorList>
    </citation>
    <scope>NUCLEOTIDE SEQUENCE [LARGE SCALE MRNA]</scope>
</reference>
<reference key="2">
    <citation type="submission" date="2005-05" db="EMBL/GenBank/DDBJ databases">
        <authorList>
            <consortium name="NIH - Zebrafish Gene Collection (ZGC) project"/>
        </authorList>
    </citation>
    <scope>NUCLEOTIDE SEQUENCE [LARGE SCALE MRNA]</scope>
    <source>
        <tissue>Embryo</tissue>
    </source>
</reference>
<reference key="3">
    <citation type="journal article" date="2008" name="PLoS Genet.">
        <title>WDR55 is a nucleolar modulator of ribosomal RNA synthesis, cell cycle progression, and teleost organ development.</title>
        <authorList>
            <person name="Iwanami N."/>
            <person name="Higuchi T."/>
            <person name="Sasano Y."/>
            <person name="Fujiwara T."/>
            <person name="Hoa V.Q."/>
            <person name="Okada M."/>
            <person name="Talukder S.R."/>
            <person name="Kunimatsu S."/>
            <person name="Li J."/>
            <person name="Saito F."/>
            <person name="Bhattacharya C."/>
            <person name="Matin A."/>
            <person name="Sasaki T."/>
            <person name="Shimizu N."/>
            <person name="Mitani H."/>
            <person name="Himmelbauer H."/>
            <person name="Momoi A."/>
            <person name="Kondoh H."/>
            <person name="Furutani-Seiki M."/>
            <person name="Takahama Y."/>
        </authorList>
    </citation>
    <scope>DISRUPTION PHENOTYPE</scope>
</reference>
<gene>
    <name type="primary">wdr55</name>
</gene>
<proteinExistence type="evidence at transcript level"/>
<comment type="function">
    <text evidence="1">Nucleolar protein that acts as a modulator of rRNA synthesis. Plays a central role during organogenesis (By similarity).</text>
</comment>
<comment type="subcellular location">
    <subcellularLocation>
        <location evidence="1">Nucleus</location>
        <location evidence="1">Nucleolus</location>
    </subcellularLocation>
</comment>
<comment type="disruption phenotype">
    <text evidence="3">Death between 10 and 12 dpf. Thymus size is remarkably reduced and the pharyngeal arches are malformed. Eyes and swim bladder are also reduced.</text>
</comment>
<comment type="similarity">
    <text evidence="4">Belongs to the WD repeat WDR55 family.</text>
</comment>
<feature type="chain" id="PRO_0000373955" description="WD repeat-containing protein 55">
    <location>
        <begin position="1"/>
        <end position="387"/>
    </location>
</feature>
<feature type="repeat" description="WD 1">
    <location>
        <begin position="33"/>
        <end position="72"/>
    </location>
</feature>
<feature type="repeat" description="WD 2">
    <location>
        <begin position="79"/>
        <end position="118"/>
    </location>
</feature>
<feature type="repeat" description="WD 3">
    <location>
        <begin position="122"/>
        <end position="160"/>
    </location>
</feature>
<feature type="repeat" description="WD 4">
    <location>
        <begin position="163"/>
        <end position="202"/>
    </location>
</feature>
<feature type="repeat" description="WD 5">
    <location>
        <begin position="205"/>
        <end position="244"/>
    </location>
</feature>
<feature type="repeat" description="WD 6">
    <location>
        <begin position="247"/>
        <end position="286"/>
    </location>
</feature>
<feature type="repeat" description="WD 7">
    <location>
        <begin position="290"/>
        <end position="329"/>
    </location>
</feature>
<feature type="region of interest" description="Disordered" evidence="2">
    <location>
        <begin position="1"/>
        <end position="24"/>
    </location>
</feature>
<feature type="region of interest" description="Disordered" evidence="2">
    <location>
        <begin position="356"/>
        <end position="387"/>
    </location>
</feature>
<feature type="compositionally biased region" description="Basic and acidic residues" evidence="2">
    <location>
        <begin position="1"/>
        <end position="10"/>
    </location>
</feature>
<feature type="compositionally biased region" description="Acidic residues" evidence="2">
    <location>
        <begin position="372"/>
        <end position="387"/>
    </location>
</feature>
<feature type="sequence conflict" description="In Ref. 1; AAT68118." evidence="4" ref="1">
    <original>T</original>
    <variation>I</variation>
    <location>
        <position position="5"/>
    </location>
</feature>
<feature type="sequence conflict" description="In Ref. 1; AAT68118." evidence="4" ref="1">
    <original>V</original>
    <variation>E</variation>
    <location>
        <position position="15"/>
    </location>
</feature>
<feature type="sequence conflict" description="In Ref. 1; AAT68118." evidence="4" ref="1">
    <original>T</original>
    <variation>P</variation>
    <location>
        <position position="22"/>
    </location>
</feature>
<feature type="sequence conflict" description="In Ref. 1; AAT68118." evidence="4" ref="1">
    <original>NDE</original>
    <variation>DD</variation>
    <location>
        <begin position="373"/>
        <end position="375"/>
    </location>
</feature>
<evidence type="ECO:0000250" key="1"/>
<evidence type="ECO:0000256" key="2">
    <source>
        <dbReference type="SAM" id="MobiDB-lite"/>
    </source>
</evidence>
<evidence type="ECO:0000269" key="3">
    <source>
    </source>
</evidence>
<evidence type="ECO:0000305" key="4"/>
<protein>
    <recommendedName>
        <fullName>WD repeat-containing protein 55</fullName>
    </recommendedName>
</protein>
<sequence length="387" mass="43172">MATPTEHEDLSEQEVTEDEFKTPKIRETPEDIKLEAIVNTIAFHPKQDILAAGDIDGDIYLFSYSCTEGENKELWSSGHHLKSCRKVLFSSDGQKLFSVSKDKAIHIMDVEAGKLETRIPKAHKVPINAMLLIDENIFATGDDEGTLKVWDMRKGTSFMDLKHHEDYISDITIDQAKRTLLTSSGDGTLGVFNIKRRRFELLSEIQNGDLTSVSIMKRGRKVVCGSGEGTIYIFNWNGFGATSDRFAVQAESVDCIVPITDSILCAASTDGVIRAINILPNRVVGSIGQHVGEAIEEIARCRDTHFLASCAHDELIKFWDISSLPDEKVNDYRRRKKKDRRLKALSNKAFDTGQNFFAGLLDTTEENGKEGENDEDDDDEDSDSGSD</sequence>
<name>WDR55_DANRE</name>
<keyword id="KW-0539">Nucleus</keyword>
<keyword id="KW-1185">Reference proteome</keyword>
<keyword id="KW-0677">Repeat</keyword>
<keyword id="KW-0698">rRNA processing</keyword>
<keyword id="KW-0853">WD repeat</keyword>
<dbReference type="EMBL" id="AY648800">
    <property type="protein sequence ID" value="AAT68118.1"/>
    <property type="molecule type" value="mRNA"/>
</dbReference>
<dbReference type="EMBL" id="BC095552">
    <property type="protein sequence ID" value="AAH95552.1"/>
    <property type="molecule type" value="mRNA"/>
</dbReference>
<dbReference type="RefSeq" id="NP_001003871.1">
    <property type="nucleotide sequence ID" value="NM_001003871.2"/>
</dbReference>
<dbReference type="SMR" id="Q6DRF9"/>
<dbReference type="FunCoup" id="Q6DRF9">
    <property type="interactions" value="1596"/>
</dbReference>
<dbReference type="STRING" id="7955.ENSDARP00000018714"/>
<dbReference type="PaxDb" id="7955-ENSDARP00000018714"/>
<dbReference type="DNASU" id="445394"/>
<dbReference type="GeneID" id="445394"/>
<dbReference type="KEGG" id="dre:445394"/>
<dbReference type="AGR" id="ZFIN:ZDB-GENE-040924-7"/>
<dbReference type="CTD" id="54853"/>
<dbReference type="ZFIN" id="ZDB-GENE-040924-7">
    <property type="gene designation" value="wdr55"/>
</dbReference>
<dbReference type="eggNOG" id="KOG2444">
    <property type="taxonomic scope" value="Eukaryota"/>
</dbReference>
<dbReference type="InParanoid" id="Q6DRF9"/>
<dbReference type="OrthoDB" id="2288928at2759"/>
<dbReference type="PhylomeDB" id="Q6DRF9"/>
<dbReference type="PRO" id="PR:Q6DRF9"/>
<dbReference type="Proteomes" id="UP000000437">
    <property type="component" value="Chromosome 21"/>
</dbReference>
<dbReference type="GO" id="GO:0005730">
    <property type="term" value="C:nucleolus"/>
    <property type="evidence" value="ECO:0000250"/>
    <property type="project" value="UniProtKB"/>
</dbReference>
<dbReference type="GO" id="GO:0160093">
    <property type="term" value="P:chordate pharynx development"/>
    <property type="evidence" value="ECO:0000315"/>
    <property type="project" value="UniProtKB"/>
</dbReference>
<dbReference type="GO" id="GO:0001654">
    <property type="term" value="P:eye development"/>
    <property type="evidence" value="ECO:0000315"/>
    <property type="project" value="UniProtKB"/>
</dbReference>
<dbReference type="GO" id="GO:0006364">
    <property type="term" value="P:rRNA processing"/>
    <property type="evidence" value="ECO:0000250"/>
    <property type="project" value="UniProtKB"/>
</dbReference>
<dbReference type="GO" id="GO:0048794">
    <property type="term" value="P:swim bladder development"/>
    <property type="evidence" value="ECO:0000315"/>
    <property type="project" value="UniProtKB"/>
</dbReference>
<dbReference type="GO" id="GO:0048538">
    <property type="term" value="P:thymus development"/>
    <property type="evidence" value="ECO:0000315"/>
    <property type="project" value="UniProtKB"/>
</dbReference>
<dbReference type="FunFam" id="2.130.10.10:FF:001361">
    <property type="entry name" value="WD repeat domain 55"/>
    <property type="match status" value="1"/>
</dbReference>
<dbReference type="FunFam" id="2.130.10.10:FF:001468">
    <property type="entry name" value="WD repeat domain 55"/>
    <property type="match status" value="1"/>
</dbReference>
<dbReference type="Gene3D" id="2.130.10.10">
    <property type="entry name" value="YVTN repeat-like/Quinoprotein amine dehydrogenase"/>
    <property type="match status" value="2"/>
</dbReference>
<dbReference type="InterPro" id="IPR015943">
    <property type="entry name" value="WD40/YVTN_repeat-like_dom_sf"/>
</dbReference>
<dbReference type="InterPro" id="IPR036322">
    <property type="entry name" value="WD40_repeat_dom_sf"/>
</dbReference>
<dbReference type="InterPro" id="IPR001680">
    <property type="entry name" value="WD40_rpt"/>
</dbReference>
<dbReference type="InterPro" id="IPR017422">
    <property type="entry name" value="WDR55"/>
</dbReference>
<dbReference type="InterPro" id="IPR050505">
    <property type="entry name" value="WDR55_POC1"/>
</dbReference>
<dbReference type="PANTHER" id="PTHR44019">
    <property type="entry name" value="WD REPEAT-CONTAINING PROTEIN 55"/>
    <property type="match status" value="1"/>
</dbReference>
<dbReference type="PANTHER" id="PTHR44019:SF20">
    <property type="entry name" value="WD REPEAT-CONTAINING PROTEIN 55"/>
    <property type="match status" value="1"/>
</dbReference>
<dbReference type="Pfam" id="PF24796">
    <property type="entry name" value="WDR55"/>
    <property type="match status" value="1"/>
</dbReference>
<dbReference type="PIRSF" id="PIRSF038169">
    <property type="entry name" value="WD_repeat_p55"/>
    <property type="match status" value="1"/>
</dbReference>
<dbReference type="SMART" id="SM00320">
    <property type="entry name" value="WD40"/>
    <property type="match status" value="6"/>
</dbReference>
<dbReference type="SUPFAM" id="SSF50978">
    <property type="entry name" value="WD40 repeat-like"/>
    <property type="match status" value="1"/>
</dbReference>
<dbReference type="PROSITE" id="PS00678">
    <property type="entry name" value="WD_REPEATS_1"/>
    <property type="match status" value="1"/>
</dbReference>
<dbReference type="PROSITE" id="PS50082">
    <property type="entry name" value="WD_REPEATS_2"/>
    <property type="match status" value="1"/>
</dbReference>
<dbReference type="PROSITE" id="PS50294">
    <property type="entry name" value="WD_REPEATS_REGION"/>
    <property type="match status" value="1"/>
</dbReference>